<name>VRAS_STAEQ</name>
<reference key="1">
    <citation type="journal article" date="2005" name="J. Bacteriol.">
        <title>Insights on evolution of virulence and resistance from the complete genome analysis of an early methicillin-resistant Staphylococcus aureus strain and a biofilm-producing methicillin-resistant Staphylococcus epidermidis strain.</title>
        <authorList>
            <person name="Gill S.R."/>
            <person name="Fouts D.E."/>
            <person name="Archer G.L."/>
            <person name="Mongodin E.F."/>
            <person name="DeBoy R.T."/>
            <person name="Ravel J."/>
            <person name="Paulsen I.T."/>
            <person name="Kolonay J.F."/>
            <person name="Brinkac L.M."/>
            <person name="Beanan M.J."/>
            <person name="Dodson R.J."/>
            <person name="Daugherty S.C."/>
            <person name="Madupu R."/>
            <person name="Angiuoli S.V."/>
            <person name="Durkin A.S."/>
            <person name="Haft D.H."/>
            <person name="Vamathevan J.J."/>
            <person name="Khouri H."/>
            <person name="Utterback T.R."/>
            <person name="Lee C."/>
            <person name="Dimitrov G."/>
            <person name="Jiang L."/>
            <person name="Qin H."/>
            <person name="Weidman J."/>
            <person name="Tran K."/>
            <person name="Kang K.H."/>
            <person name="Hance I.R."/>
            <person name="Nelson K.E."/>
            <person name="Fraser C.M."/>
        </authorList>
    </citation>
    <scope>NUCLEOTIDE SEQUENCE [LARGE SCALE GENOMIC DNA]</scope>
    <source>
        <strain>ATCC 35984 / DSM 28319 / BCRC 17069 / CCUG 31568 / BM 3577 / RP62A</strain>
    </source>
</reference>
<gene>
    <name type="primary">vraS</name>
    <name type="ordered locus">SERP1423</name>
</gene>
<dbReference type="EC" id="2.7.13.3"/>
<dbReference type="EMBL" id="CP000029">
    <property type="protein sequence ID" value="AAW54787.1"/>
    <property type="molecule type" value="Genomic_DNA"/>
</dbReference>
<dbReference type="RefSeq" id="WP_001830374.1">
    <property type="nucleotide sequence ID" value="NC_002976.3"/>
</dbReference>
<dbReference type="SMR" id="Q5HN49"/>
<dbReference type="STRING" id="176279.SERP1423"/>
<dbReference type="KEGG" id="ser:SERP1423"/>
<dbReference type="eggNOG" id="COG4585">
    <property type="taxonomic scope" value="Bacteria"/>
</dbReference>
<dbReference type="HOGENOM" id="CLU_000445_20_12_9"/>
<dbReference type="Proteomes" id="UP000000531">
    <property type="component" value="Chromosome"/>
</dbReference>
<dbReference type="GO" id="GO:0005886">
    <property type="term" value="C:plasma membrane"/>
    <property type="evidence" value="ECO:0007669"/>
    <property type="project" value="UniProtKB-SubCell"/>
</dbReference>
<dbReference type="GO" id="GO:0005524">
    <property type="term" value="F:ATP binding"/>
    <property type="evidence" value="ECO:0007669"/>
    <property type="project" value="UniProtKB-KW"/>
</dbReference>
<dbReference type="GO" id="GO:0000155">
    <property type="term" value="F:phosphorelay sensor kinase activity"/>
    <property type="evidence" value="ECO:0007669"/>
    <property type="project" value="InterPro"/>
</dbReference>
<dbReference type="GO" id="GO:0046983">
    <property type="term" value="F:protein dimerization activity"/>
    <property type="evidence" value="ECO:0007669"/>
    <property type="project" value="InterPro"/>
</dbReference>
<dbReference type="CDD" id="cd16917">
    <property type="entry name" value="HATPase_UhpB-NarQ-NarX-like"/>
    <property type="match status" value="1"/>
</dbReference>
<dbReference type="Gene3D" id="1.20.5.1930">
    <property type="match status" value="1"/>
</dbReference>
<dbReference type="Gene3D" id="3.30.565.10">
    <property type="entry name" value="Histidine kinase-like ATPase, C-terminal domain"/>
    <property type="match status" value="1"/>
</dbReference>
<dbReference type="InterPro" id="IPR036890">
    <property type="entry name" value="HATPase_C_sf"/>
</dbReference>
<dbReference type="InterPro" id="IPR017202">
    <property type="entry name" value="LiaS/VraS"/>
</dbReference>
<dbReference type="InterPro" id="IPR050482">
    <property type="entry name" value="Sensor_HK_TwoCompSys"/>
</dbReference>
<dbReference type="InterPro" id="IPR011712">
    <property type="entry name" value="Sig_transdc_His_kin_sub3_dim/P"/>
</dbReference>
<dbReference type="PANTHER" id="PTHR24421">
    <property type="entry name" value="NITRATE/NITRITE SENSOR PROTEIN NARX-RELATED"/>
    <property type="match status" value="1"/>
</dbReference>
<dbReference type="PANTHER" id="PTHR24421:SF37">
    <property type="entry name" value="SENSOR HISTIDINE KINASE NARS"/>
    <property type="match status" value="1"/>
</dbReference>
<dbReference type="Pfam" id="PF02518">
    <property type="entry name" value="HATPase_c"/>
    <property type="match status" value="1"/>
</dbReference>
<dbReference type="Pfam" id="PF07730">
    <property type="entry name" value="HisKA_3"/>
    <property type="match status" value="1"/>
</dbReference>
<dbReference type="PIRSF" id="PIRSF037431">
    <property type="entry name" value="STHK_LiaS"/>
    <property type="match status" value="1"/>
</dbReference>
<dbReference type="SMART" id="SM00387">
    <property type="entry name" value="HATPase_c"/>
    <property type="match status" value="1"/>
</dbReference>
<dbReference type="SUPFAM" id="SSF55874">
    <property type="entry name" value="ATPase domain of HSP90 chaperone/DNA topoisomerase II/histidine kinase"/>
    <property type="match status" value="1"/>
</dbReference>
<proteinExistence type="inferred from homology"/>
<sequence length="348" mass="40066">MNHYIRAIGSMLILVYSMLIAFLFIDKVFVNIIFFQGMFYTQIFGIPVFLFLNLLIVLLCIIVGSVLAYKINQQNDWIISQIERSIEGQTVGINDQNIELYTETIDIYHTLVPLNQELHRLRMKTQNLTNENYNINDVKVKKIIEDERQRLARELHDSVSQQLFAASMMLSAIKESKLEPPLNQQIPILEKMVQDSQLEMRALLLHLRPIGLKDKSLGEGIKDLVIDLQKKVPMKVVHEIQDFEVPKGIEDHLFRITQEAISNTLRHSNGTKVTVELFNQEDYLLLRIQDNGKGFNVDEKFEQSYGLKNMRERALEIGATFHIVSLPDSGTRIEVKAPLNKEENSSGD</sequence>
<protein>
    <recommendedName>
        <fullName>Sensor protein VraS</fullName>
        <ecNumber>2.7.13.3</ecNumber>
    </recommendedName>
</protein>
<comment type="function">
    <text evidence="1">Member of the two-component regulatory system VraS/VraR involved in the control of the cell wall peptidoglycan biosynthesis. Probably activates VraR by phosphorylation (By similarity).</text>
</comment>
<comment type="catalytic activity">
    <reaction>
        <text>ATP + protein L-histidine = ADP + protein N-phospho-L-histidine.</text>
        <dbReference type="EC" id="2.7.13.3"/>
    </reaction>
</comment>
<comment type="subcellular location">
    <subcellularLocation>
        <location evidence="3">Cell membrane</location>
        <topology evidence="3">Multi-pass membrane protein</topology>
    </subcellularLocation>
</comment>
<accession>Q5HN49</accession>
<keyword id="KW-0067">ATP-binding</keyword>
<keyword id="KW-1003">Cell membrane</keyword>
<keyword id="KW-0418">Kinase</keyword>
<keyword id="KW-0472">Membrane</keyword>
<keyword id="KW-0547">Nucleotide-binding</keyword>
<keyword id="KW-0597">Phosphoprotein</keyword>
<keyword id="KW-1185">Reference proteome</keyword>
<keyword id="KW-0808">Transferase</keyword>
<keyword id="KW-0812">Transmembrane</keyword>
<keyword id="KW-1133">Transmembrane helix</keyword>
<keyword id="KW-0902">Two-component regulatory system</keyword>
<feature type="chain" id="PRO_0000074905" description="Sensor protein VraS">
    <location>
        <begin position="1"/>
        <end position="348"/>
    </location>
</feature>
<feature type="transmembrane region" description="Helical" evidence="2">
    <location>
        <begin position="13"/>
        <end position="33"/>
    </location>
</feature>
<feature type="transmembrane region" description="Helical" evidence="2">
    <location>
        <begin position="43"/>
        <end position="63"/>
    </location>
</feature>
<feature type="domain" description="Histidine kinase">
    <location>
        <begin position="150"/>
        <end position="341"/>
    </location>
</feature>
<evidence type="ECO:0000250" key="1"/>
<evidence type="ECO:0000255" key="2"/>
<evidence type="ECO:0000305" key="3"/>
<organism>
    <name type="scientific">Staphylococcus epidermidis (strain ATCC 35984 / DSM 28319 / BCRC 17069 / CCUG 31568 / BM 3577 / RP62A)</name>
    <dbReference type="NCBI Taxonomy" id="176279"/>
    <lineage>
        <taxon>Bacteria</taxon>
        <taxon>Bacillati</taxon>
        <taxon>Bacillota</taxon>
        <taxon>Bacilli</taxon>
        <taxon>Bacillales</taxon>
        <taxon>Staphylococcaceae</taxon>
        <taxon>Staphylococcus</taxon>
    </lineage>
</organism>